<organism>
    <name type="scientific">Brevibacillus brevis (strain 47 / JCM 6285 / NBRC 100599)</name>
    <dbReference type="NCBI Taxonomy" id="358681"/>
    <lineage>
        <taxon>Bacteria</taxon>
        <taxon>Bacillati</taxon>
        <taxon>Bacillota</taxon>
        <taxon>Bacilli</taxon>
        <taxon>Bacillales</taxon>
        <taxon>Paenibacillaceae</taxon>
        <taxon>Brevibacillus</taxon>
    </lineage>
</organism>
<evidence type="ECO:0000255" key="1">
    <source>
        <dbReference type="HAMAP-Rule" id="MF_01197"/>
    </source>
</evidence>
<evidence type="ECO:0000256" key="2">
    <source>
        <dbReference type="SAM" id="MobiDB-lite"/>
    </source>
</evidence>
<protein>
    <recommendedName>
        <fullName evidence="1">Cell division protein SepF</fullName>
    </recommendedName>
</protein>
<dbReference type="EMBL" id="AP008955">
    <property type="protein sequence ID" value="BAH44799.1"/>
    <property type="molecule type" value="Genomic_DNA"/>
</dbReference>
<dbReference type="RefSeq" id="WP_015892082.1">
    <property type="nucleotide sequence ID" value="NC_012491.1"/>
</dbReference>
<dbReference type="SMR" id="C0ZG90"/>
<dbReference type="STRING" id="358681.BBR47_38220"/>
<dbReference type="KEGG" id="bbe:BBR47_38220"/>
<dbReference type="eggNOG" id="COG1799">
    <property type="taxonomic scope" value="Bacteria"/>
</dbReference>
<dbReference type="HOGENOM" id="CLU_078499_4_1_9"/>
<dbReference type="Proteomes" id="UP000001877">
    <property type="component" value="Chromosome"/>
</dbReference>
<dbReference type="GO" id="GO:0005737">
    <property type="term" value="C:cytoplasm"/>
    <property type="evidence" value="ECO:0007669"/>
    <property type="project" value="UniProtKB-SubCell"/>
</dbReference>
<dbReference type="GO" id="GO:0000917">
    <property type="term" value="P:division septum assembly"/>
    <property type="evidence" value="ECO:0007669"/>
    <property type="project" value="UniProtKB-KW"/>
</dbReference>
<dbReference type="GO" id="GO:0043093">
    <property type="term" value="P:FtsZ-dependent cytokinesis"/>
    <property type="evidence" value="ECO:0007669"/>
    <property type="project" value="UniProtKB-UniRule"/>
</dbReference>
<dbReference type="Gene3D" id="3.30.110.150">
    <property type="entry name" value="SepF-like protein"/>
    <property type="match status" value="1"/>
</dbReference>
<dbReference type="HAMAP" id="MF_01197">
    <property type="entry name" value="SepF"/>
    <property type="match status" value="1"/>
</dbReference>
<dbReference type="InterPro" id="IPR023052">
    <property type="entry name" value="Cell_div_SepF"/>
</dbReference>
<dbReference type="InterPro" id="IPR007561">
    <property type="entry name" value="Cell_div_SepF/SepF-rel"/>
</dbReference>
<dbReference type="InterPro" id="IPR038594">
    <property type="entry name" value="SepF-like_sf"/>
</dbReference>
<dbReference type="PANTHER" id="PTHR35798">
    <property type="entry name" value="CELL DIVISION PROTEIN SEPF"/>
    <property type="match status" value="1"/>
</dbReference>
<dbReference type="PANTHER" id="PTHR35798:SF1">
    <property type="entry name" value="CELL DIVISION PROTEIN SEPF"/>
    <property type="match status" value="1"/>
</dbReference>
<dbReference type="Pfam" id="PF04472">
    <property type="entry name" value="SepF"/>
    <property type="match status" value="1"/>
</dbReference>
<accession>C0ZG90</accession>
<proteinExistence type="inferred from homology"/>
<sequence>MGVMNKLMGFLGLENEEYIEETTTVEEEREEQESSHKRQPAISRTNNVVPFQAREKEGIRLILCEPRHYSDAQDIADNLRHRRPVVVNLHRVEKDQAKRIIDFLSGTVYALNGDIQKVGDTIFVCTPDHVDIQGTISSVLEE</sequence>
<feature type="chain" id="PRO_1000164530" description="Cell division protein SepF">
    <location>
        <begin position="1"/>
        <end position="142"/>
    </location>
</feature>
<feature type="region of interest" description="Disordered" evidence="2">
    <location>
        <begin position="21"/>
        <end position="46"/>
    </location>
</feature>
<feature type="compositionally biased region" description="Acidic residues" evidence="2">
    <location>
        <begin position="21"/>
        <end position="31"/>
    </location>
</feature>
<name>SEPF_BREBN</name>
<comment type="function">
    <text evidence="1">Cell division protein that is part of the divisome complex and is recruited early to the Z-ring. Probably stimulates Z-ring formation, perhaps through the cross-linking of FtsZ protofilaments. Its function overlaps with FtsA.</text>
</comment>
<comment type="subunit">
    <text evidence="1">Homodimer. Interacts with FtsZ.</text>
</comment>
<comment type="subcellular location">
    <subcellularLocation>
        <location evidence="1">Cytoplasm</location>
    </subcellularLocation>
    <text evidence="1">Localizes to the division site, in a FtsZ-dependent manner.</text>
</comment>
<comment type="similarity">
    <text evidence="1">Belongs to the SepF family.</text>
</comment>
<keyword id="KW-0131">Cell cycle</keyword>
<keyword id="KW-0132">Cell division</keyword>
<keyword id="KW-0963">Cytoplasm</keyword>
<keyword id="KW-1185">Reference proteome</keyword>
<keyword id="KW-0717">Septation</keyword>
<gene>
    <name evidence="1" type="primary">sepF</name>
    <name type="ordered locus">BBR47_38220</name>
</gene>
<reference key="1">
    <citation type="submission" date="2005-03" db="EMBL/GenBank/DDBJ databases">
        <title>Brevibacillus brevis strain 47, complete genome.</title>
        <authorList>
            <person name="Hosoyama A."/>
            <person name="Yamada R."/>
            <person name="Hongo Y."/>
            <person name="Terui Y."/>
            <person name="Ankai A."/>
            <person name="Masuyama W."/>
            <person name="Sekiguchi M."/>
            <person name="Takeda T."/>
            <person name="Asano K."/>
            <person name="Ohji S."/>
            <person name="Ichikawa N."/>
            <person name="Narita S."/>
            <person name="Aoki N."/>
            <person name="Miura H."/>
            <person name="Matsushita S."/>
            <person name="Sekigawa T."/>
            <person name="Yamagata H."/>
            <person name="Yoshikawa H."/>
            <person name="Udaka S."/>
            <person name="Tanikawa S."/>
            <person name="Fujita N."/>
        </authorList>
    </citation>
    <scope>NUCLEOTIDE SEQUENCE [LARGE SCALE GENOMIC DNA]</scope>
    <source>
        <strain>47 / JCM 6285 / NBRC 100599</strain>
    </source>
</reference>